<sequence>MSTTSRTLITSAIPYINGIKHLGNLVGSQLPADLYARYLRARGQEVLFLCATDEHGTPAELAAAKAGKPVAEYCADMHAVQAEIARGFRLSFDHFGRSSSPQNHALTQHFAGKLADAGLIAEVEEKQVYSHADGRFLPDRYIEGTCPNCGYDKARGDQCENCTKQLDPTDLINPRSAISGSTDLEVRETKHLYLRQSQLRGQLSDWISSKTDWPILTTSIAKKWLNDGDGLQDRGITRDLDWGVPVKRGDADWPGMEGKVFYVWFDAPIEYIACAAEAVEEGSISDWERWWRVDKGADDVRYVQFMGKDNVPFHTLSFPATILGSGEPWKLVDYIKSFNYLNYDGGQFSTSQGRGVFMDQALEILPSDYWRWWLLSHAPETSDAEFTWEAFQQDVNKDLADVLGNFVSRITKFCRSKFGEVVPEGGDYGPQETALIADLDKRLAAYQTHMDAIDIRKAAAELRAIWVAGNEYLQSAAPWTAFKTDPDRAAAITRFALNLIPFYAGLSAPFIPDAAQAMAEGMHTNLTWPKDARLTTLPAGHAFTVPDVLFAKIADEQREDWAARFSGVRD</sequence>
<keyword id="KW-0030">Aminoacyl-tRNA synthetase</keyword>
<keyword id="KW-0067">ATP-binding</keyword>
<keyword id="KW-0963">Cytoplasm</keyword>
<keyword id="KW-0436">Ligase</keyword>
<keyword id="KW-0479">Metal-binding</keyword>
<keyword id="KW-0547">Nucleotide-binding</keyword>
<keyword id="KW-0648">Protein biosynthesis</keyword>
<keyword id="KW-1185">Reference proteome</keyword>
<keyword id="KW-0862">Zinc</keyword>
<gene>
    <name evidence="1" type="primary">metG</name>
    <name type="ordered locus">Jann_3145</name>
</gene>
<feature type="chain" id="PRO_0000331840" description="Methionine--tRNA ligase">
    <location>
        <begin position="1"/>
        <end position="570"/>
    </location>
</feature>
<feature type="short sequence motif" description="'HIGH' region">
    <location>
        <begin position="14"/>
        <end position="24"/>
    </location>
</feature>
<feature type="short sequence motif" description="'KMSKS' region">
    <location>
        <begin position="347"/>
        <end position="351"/>
    </location>
</feature>
<feature type="binding site" evidence="1">
    <location>
        <position position="146"/>
    </location>
    <ligand>
        <name>Zn(2+)</name>
        <dbReference type="ChEBI" id="CHEBI:29105"/>
    </ligand>
</feature>
<feature type="binding site" evidence="1">
    <location>
        <position position="149"/>
    </location>
    <ligand>
        <name>Zn(2+)</name>
        <dbReference type="ChEBI" id="CHEBI:29105"/>
    </ligand>
</feature>
<feature type="binding site" evidence="1">
    <location>
        <position position="159"/>
    </location>
    <ligand>
        <name>Zn(2+)</name>
        <dbReference type="ChEBI" id="CHEBI:29105"/>
    </ligand>
</feature>
<feature type="binding site" evidence="1">
    <location>
        <position position="162"/>
    </location>
    <ligand>
        <name>Zn(2+)</name>
        <dbReference type="ChEBI" id="CHEBI:29105"/>
    </ligand>
</feature>
<feature type="binding site" evidence="1">
    <location>
        <position position="350"/>
    </location>
    <ligand>
        <name>ATP</name>
        <dbReference type="ChEBI" id="CHEBI:30616"/>
    </ligand>
</feature>
<protein>
    <recommendedName>
        <fullName evidence="1">Methionine--tRNA ligase</fullName>
        <ecNumber evidence="1">6.1.1.10</ecNumber>
    </recommendedName>
    <alternativeName>
        <fullName evidence="1">Methionyl-tRNA synthetase</fullName>
        <shortName evidence="1">MetRS</shortName>
    </alternativeName>
</protein>
<comment type="function">
    <text evidence="1">Is required not only for elongation of protein synthesis but also for the initiation of all mRNA translation through initiator tRNA(fMet) aminoacylation.</text>
</comment>
<comment type="catalytic activity">
    <reaction evidence="1">
        <text>tRNA(Met) + L-methionine + ATP = L-methionyl-tRNA(Met) + AMP + diphosphate</text>
        <dbReference type="Rhea" id="RHEA:13481"/>
        <dbReference type="Rhea" id="RHEA-COMP:9667"/>
        <dbReference type="Rhea" id="RHEA-COMP:9698"/>
        <dbReference type="ChEBI" id="CHEBI:30616"/>
        <dbReference type="ChEBI" id="CHEBI:33019"/>
        <dbReference type="ChEBI" id="CHEBI:57844"/>
        <dbReference type="ChEBI" id="CHEBI:78442"/>
        <dbReference type="ChEBI" id="CHEBI:78530"/>
        <dbReference type="ChEBI" id="CHEBI:456215"/>
        <dbReference type="EC" id="6.1.1.10"/>
    </reaction>
</comment>
<comment type="cofactor">
    <cofactor evidence="1">
        <name>Zn(2+)</name>
        <dbReference type="ChEBI" id="CHEBI:29105"/>
    </cofactor>
    <text evidence="1">Binds 1 zinc ion per subunit.</text>
</comment>
<comment type="subunit">
    <text evidence="1">Monomer.</text>
</comment>
<comment type="subcellular location">
    <subcellularLocation>
        <location evidence="1">Cytoplasm</location>
    </subcellularLocation>
</comment>
<comment type="similarity">
    <text evidence="1">Belongs to the class-I aminoacyl-tRNA synthetase family. MetG type 1 subfamily.</text>
</comment>
<reference key="1">
    <citation type="submission" date="2006-02" db="EMBL/GenBank/DDBJ databases">
        <title>Complete sequence of chromosome of Jannaschia sp. CCS1.</title>
        <authorList>
            <consortium name="US DOE Joint Genome Institute"/>
            <person name="Copeland A."/>
            <person name="Lucas S."/>
            <person name="Lapidus A."/>
            <person name="Barry K."/>
            <person name="Detter J.C."/>
            <person name="Glavina del Rio T."/>
            <person name="Hammon N."/>
            <person name="Israni S."/>
            <person name="Pitluck S."/>
            <person name="Brettin T."/>
            <person name="Bruce D."/>
            <person name="Han C."/>
            <person name="Tapia R."/>
            <person name="Gilna P."/>
            <person name="Chertkov O."/>
            <person name="Saunders E."/>
            <person name="Schmutz J."/>
            <person name="Larimer F."/>
            <person name="Land M."/>
            <person name="Kyrpides N."/>
            <person name="Lykidis A."/>
            <person name="Moran M.A."/>
            <person name="Belas R."/>
            <person name="Ye W."/>
            <person name="Buchan A."/>
            <person name="Gonzalez J.M."/>
            <person name="Schell M.A."/>
            <person name="Richardson P."/>
        </authorList>
    </citation>
    <scope>NUCLEOTIDE SEQUENCE [LARGE SCALE GENOMIC DNA]</scope>
    <source>
        <strain>CCS1</strain>
    </source>
</reference>
<name>SYM_JANSC</name>
<proteinExistence type="inferred from homology"/>
<evidence type="ECO:0000255" key="1">
    <source>
        <dbReference type="HAMAP-Rule" id="MF_00098"/>
    </source>
</evidence>
<dbReference type="EC" id="6.1.1.10" evidence="1"/>
<dbReference type="EMBL" id="CP000264">
    <property type="protein sequence ID" value="ABD56062.1"/>
    <property type="molecule type" value="Genomic_DNA"/>
</dbReference>
<dbReference type="RefSeq" id="WP_011456266.1">
    <property type="nucleotide sequence ID" value="NC_007802.1"/>
</dbReference>
<dbReference type="SMR" id="Q28MK0"/>
<dbReference type="STRING" id="290400.Jann_3145"/>
<dbReference type="KEGG" id="jan:Jann_3145"/>
<dbReference type="eggNOG" id="COG0143">
    <property type="taxonomic scope" value="Bacteria"/>
</dbReference>
<dbReference type="HOGENOM" id="CLU_009710_1_2_5"/>
<dbReference type="OrthoDB" id="9810191at2"/>
<dbReference type="Proteomes" id="UP000008326">
    <property type="component" value="Chromosome"/>
</dbReference>
<dbReference type="GO" id="GO:0017101">
    <property type="term" value="C:aminoacyl-tRNA synthetase multienzyme complex"/>
    <property type="evidence" value="ECO:0007669"/>
    <property type="project" value="TreeGrafter"/>
</dbReference>
<dbReference type="GO" id="GO:0005829">
    <property type="term" value="C:cytosol"/>
    <property type="evidence" value="ECO:0007669"/>
    <property type="project" value="TreeGrafter"/>
</dbReference>
<dbReference type="GO" id="GO:0005524">
    <property type="term" value="F:ATP binding"/>
    <property type="evidence" value="ECO:0007669"/>
    <property type="project" value="UniProtKB-UniRule"/>
</dbReference>
<dbReference type="GO" id="GO:0046872">
    <property type="term" value="F:metal ion binding"/>
    <property type="evidence" value="ECO:0007669"/>
    <property type="project" value="UniProtKB-KW"/>
</dbReference>
<dbReference type="GO" id="GO:0004825">
    <property type="term" value="F:methionine-tRNA ligase activity"/>
    <property type="evidence" value="ECO:0007669"/>
    <property type="project" value="UniProtKB-UniRule"/>
</dbReference>
<dbReference type="GO" id="GO:0006431">
    <property type="term" value="P:methionyl-tRNA aminoacylation"/>
    <property type="evidence" value="ECO:0007669"/>
    <property type="project" value="UniProtKB-UniRule"/>
</dbReference>
<dbReference type="CDD" id="cd07957">
    <property type="entry name" value="Anticodon_Ia_Met"/>
    <property type="match status" value="1"/>
</dbReference>
<dbReference type="CDD" id="cd00814">
    <property type="entry name" value="MetRS_core"/>
    <property type="match status" value="1"/>
</dbReference>
<dbReference type="FunFam" id="2.20.28.20:FF:000001">
    <property type="entry name" value="Methionine--tRNA ligase"/>
    <property type="match status" value="1"/>
</dbReference>
<dbReference type="Gene3D" id="3.40.50.620">
    <property type="entry name" value="HUPs"/>
    <property type="match status" value="1"/>
</dbReference>
<dbReference type="Gene3D" id="1.10.730.10">
    <property type="entry name" value="Isoleucyl-tRNA Synthetase, Domain 1"/>
    <property type="match status" value="1"/>
</dbReference>
<dbReference type="Gene3D" id="2.20.28.20">
    <property type="entry name" value="Methionyl-tRNA synthetase, Zn-domain"/>
    <property type="match status" value="1"/>
</dbReference>
<dbReference type="HAMAP" id="MF_00098">
    <property type="entry name" value="Met_tRNA_synth_type1"/>
    <property type="match status" value="1"/>
</dbReference>
<dbReference type="InterPro" id="IPR041872">
    <property type="entry name" value="Anticodon_Met"/>
</dbReference>
<dbReference type="InterPro" id="IPR023458">
    <property type="entry name" value="Met-tRNA_ligase_1"/>
</dbReference>
<dbReference type="InterPro" id="IPR014758">
    <property type="entry name" value="Met-tRNA_synth"/>
</dbReference>
<dbReference type="InterPro" id="IPR015413">
    <property type="entry name" value="Methionyl/Leucyl_tRNA_Synth"/>
</dbReference>
<dbReference type="InterPro" id="IPR033911">
    <property type="entry name" value="MetRS_core"/>
</dbReference>
<dbReference type="InterPro" id="IPR029038">
    <property type="entry name" value="MetRS_Zn"/>
</dbReference>
<dbReference type="InterPro" id="IPR014729">
    <property type="entry name" value="Rossmann-like_a/b/a_fold"/>
</dbReference>
<dbReference type="InterPro" id="IPR009080">
    <property type="entry name" value="tRNAsynth_Ia_anticodon-bd"/>
</dbReference>
<dbReference type="NCBIfam" id="TIGR00398">
    <property type="entry name" value="metG"/>
    <property type="match status" value="1"/>
</dbReference>
<dbReference type="PANTHER" id="PTHR45765">
    <property type="entry name" value="METHIONINE--TRNA LIGASE"/>
    <property type="match status" value="1"/>
</dbReference>
<dbReference type="PANTHER" id="PTHR45765:SF1">
    <property type="entry name" value="METHIONINE--TRNA LIGASE, CYTOPLASMIC"/>
    <property type="match status" value="1"/>
</dbReference>
<dbReference type="Pfam" id="PF19303">
    <property type="entry name" value="Anticodon_3"/>
    <property type="match status" value="1"/>
</dbReference>
<dbReference type="Pfam" id="PF09334">
    <property type="entry name" value="tRNA-synt_1g"/>
    <property type="match status" value="1"/>
</dbReference>
<dbReference type="PRINTS" id="PR01041">
    <property type="entry name" value="TRNASYNTHMET"/>
</dbReference>
<dbReference type="SUPFAM" id="SSF47323">
    <property type="entry name" value="Anticodon-binding domain of a subclass of class I aminoacyl-tRNA synthetases"/>
    <property type="match status" value="1"/>
</dbReference>
<dbReference type="SUPFAM" id="SSF57770">
    <property type="entry name" value="Methionyl-tRNA synthetase (MetRS), Zn-domain"/>
    <property type="match status" value="1"/>
</dbReference>
<dbReference type="SUPFAM" id="SSF52374">
    <property type="entry name" value="Nucleotidylyl transferase"/>
    <property type="match status" value="1"/>
</dbReference>
<accession>Q28MK0</accession>
<organism>
    <name type="scientific">Jannaschia sp. (strain CCS1)</name>
    <dbReference type="NCBI Taxonomy" id="290400"/>
    <lineage>
        <taxon>Bacteria</taxon>
        <taxon>Pseudomonadati</taxon>
        <taxon>Pseudomonadota</taxon>
        <taxon>Alphaproteobacteria</taxon>
        <taxon>Rhodobacterales</taxon>
        <taxon>Roseobacteraceae</taxon>
        <taxon>Jannaschia</taxon>
    </lineage>
</organism>